<reference key="1">
    <citation type="journal article" date="2003" name="Science">
        <title>Role of mobile DNA in the evolution of vancomycin-resistant Enterococcus faecalis.</title>
        <authorList>
            <person name="Paulsen I.T."/>
            <person name="Banerjei L."/>
            <person name="Myers G.S.A."/>
            <person name="Nelson K.E."/>
            <person name="Seshadri R."/>
            <person name="Read T.D."/>
            <person name="Fouts D.E."/>
            <person name="Eisen J.A."/>
            <person name="Gill S.R."/>
            <person name="Heidelberg J.F."/>
            <person name="Tettelin H."/>
            <person name="Dodson R.J."/>
            <person name="Umayam L.A."/>
            <person name="Brinkac L.M."/>
            <person name="Beanan M.J."/>
            <person name="Daugherty S.C."/>
            <person name="DeBoy R.T."/>
            <person name="Durkin S.A."/>
            <person name="Kolonay J.F."/>
            <person name="Madupu R."/>
            <person name="Nelson W.C."/>
            <person name="Vamathevan J.J."/>
            <person name="Tran B."/>
            <person name="Upton J."/>
            <person name="Hansen T."/>
            <person name="Shetty J."/>
            <person name="Khouri H.M."/>
            <person name="Utterback T.R."/>
            <person name="Radune D."/>
            <person name="Ketchum K.A."/>
            <person name="Dougherty B.A."/>
            <person name="Fraser C.M."/>
        </authorList>
    </citation>
    <scope>NUCLEOTIDE SEQUENCE [LARGE SCALE GENOMIC DNA]</scope>
    <source>
        <strain>ATCC 700802 / V583</strain>
    </source>
</reference>
<sequence>MKLTTIPNEFKEAAPVIREINAQGFEAYFVGGSVRDALLNKPIHDVDIATSAYPEEIKQIFKRTVDVGIEHGTVLVLMEDQQYEVTTFRTESTYQDFRRPDEVTFVRSLKEDLKRRDFTINALALDSTGEIIDLFDGIEDLTNQTIRAVGNPHERFHEDALRMMRGLRFASQLDFKIEEKTLAAIAEFHPLLEKISVERITIEFVKMLLGVNRQGGLAPFIETECYQYCPKLREQGAGLFRLMDLPARQIETEAEAWTLLIQSLNLPEAEIRSFLKAWKLSNQLIQNVSQLVRGLRFRLSNDWQPMMLYELGEESAVLVERLLYYYQQESQVQVTKELVKALPIHQRHELAITGKDLLAVLEETPGKWLGELIAEIEQHVVEGSLENKQEVLLSFAKKQRSKGEKA</sequence>
<dbReference type="EC" id="2.7.7.72" evidence="1"/>
<dbReference type="EMBL" id="AE016830">
    <property type="protein sequence ID" value="AAO81345.1"/>
    <property type="molecule type" value="Genomic_DNA"/>
</dbReference>
<dbReference type="RefSeq" id="NP_815275.1">
    <property type="nucleotide sequence ID" value="NC_004668.1"/>
</dbReference>
<dbReference type="RefSeq" id="WP_002365655.1">
    <property type="nucleotide sequence ID" value="NZ_KE136528.1"/>
</dbReference>
<dbReference type="SMR" id="Q834S5"/>
<dbReference type="STRING" id="226185.EF_1558"/>
<dbReference type="EnsemblBacteria" id="AAO81345">
    <property type="protein sequence ID" value="AAO81345"/>
    <property type="gene ID" value="EF_1558"/>
</dbReference>
<dbReference type="KEGG" id="efa:EF1558"/>
<dbReference type="PATRIC" id="fig|226185.9.peg.1462"/>
<dbReference type="eggNOG" id="COG0617">
    <property type="taxonomic scope" value="Bacteria"/>
</dbReference>
<dbReference type="HOGENOM" id="CLU_015961_3_0_9"/>
<dbReference type="Proteomes" id="UP000001415">
    <property type="component" value="Chromosome"/>
</dbReference>
<dbReference type="GO" id="GO:0005524">
    <property type="term" value="F:ATP binding"/>
    <property type="evidence" value="ECO:0007669"/>
    <property type="project" value="UniProtKB-UniRule"/>
</dbReference>
<dbReference type="GO" id="GO:0004810">
    <property type="term" value="F:CCA tRNA nucleotidyltransferase activity"/>
    <property type="evidence" value="ECO:0007669"/>
    <property type="project" value="UniProtKB-UniRule"/>
</dbReference>
<dbReference type="GO" id="GO:0000287">
    <property type="term" value="F:magnesium ion binding"/>
    <property type="evidence" value="ECO:0007669"/>
    <property type="project" value="UniProtKB-UniRule"/>
</dbReference>
<dbReference type="GO" id="GO:0000049">
    <property type="term" value="F:tRNA binding"/>
    <property type="evidence" value="ECO:0007669"/>
    <property type="project" value="UniProtKB-UniRule"/>
</dbReference>
<dbReference type="GO" id="GO:0042245">
    <property type="term" value="P:RNA repair"/>
    <property type="evidence" value="ECO:0007669"/>
    <property type="project" value="UniProtKB-KW"/>
</dbReference>
<dbReference type="GO" id="GO:0001680">
    <property type="term" value="P:tRNA 3'-terminal CCA addition"/>
    <property type="evidence" value="ECO:0007669"/>
    <property type="project" value="UniProtKB-UniRule"/>
</dbReference>
<dbReference type="CDD" id="cd05398">
    <property type="entry name" value="NT_ClassII-CCAase"/>
    <property type="match status" value="1"/>
</dbReference>
<dbReference type="Gene3D" id="1.10.110.30">
    <property type="match status" value="1"/>
</dbReference>
<dbReference type="Gene3D" id="1.10.246.80">
    <property type="match status" value="1"/>
</dbReference>
<dbReference type="Gene3D" id="1.20.58.560">
    <property type="match status" value="1"/>
</dbReference>
<dbReference type="Gene3D" id="3.30.460.10">
    <property type="entry name" value="Beta Polymerase, domain 2"/>
    <property type="match status" value="1"/>
</dbReference>
<dbReference type="HAMAP" id="MF_01263">
    <property type="entry name" value="CCA_bact_type3"/>
    <property type="match status" value="1"/>
</dbReference>
<dbReference type="InterPro" id="IPR050264">
    <property type="entry name" value="Bact_CCA-adding_enz_type3_sf"/>
</dbReference>
<dbReference type="InterPro" id="IPR032810">
    <property type="entry name" value="CCA-adding_enz_C"/>
</dbReference>
<dbReference type="InterPro" id="IPR023068">
    <property type="entry name" value="CCA-adding_enz_firmicutes"/>
</dbReference>
<dbReference type="InterPro" id="IPR043519">
    <property type="entry name" value="NT_sf"/>
</dbReference>
<dbReference type="InterPro" id="IPR002646">
    <property type="entry name" value="PolA_pol_head_dom"/>
</dbReference>
<dbReference type="InterPro" id="IPR032828">
    <property type="entry name" value="PolyA_RNA-bd"/>
</dbReference>
<dbReference type="NCBIfam" id="NF009814">
    <property type="entry name" value="PRK13299.1"/>
    <property type="match status" value="1"/>
</dbReference>
<dbReference type="PANTHER" id="PTHR46173">
    <property type="entry name" value="CCA TRNA NUCLEOTIDYLTRANSFERASE 1, MITOCHONDRIAL"/>
    <property type="match status" value="1"/>
</dbReference>
<dbReference type="PANTHER" id="PTHR46173:SF1">
    <property type="entry name" value="CCA TRNA NUCLEOTIDYLTRANSFERASE 1, MITOCHONDRIAL"/>
    <property type="match status" value="1"/>
</dbReference>
<dbReference type="Pfam" id="PF01743">
    <property type="entry name" value="PolyA_pol"/>
    <property type="match status" value="1"/>
</dbReference>
<dbReference type="Pfam" id="PF12627">
    <property type="entry name" value="PolyA_pol_RNAbd"/>
    <property type="match status" value="1"/>
</dbReference>
<dbReference type="Pfam" id="PF13735">
    <property type="entry name" value="tRNA_NucTran2_2"/>
    <property type="match status" value="1"/>
</dbReference>
<dbReference type="SUPFAM" id="SSF81301">
    <property type="entry name" value="Nucleotidyltransferase"/>
    <property type="match status" value="1"/>
</dbReference>
<dbReference type="SUPFAM" id="SSF81891">
    <property type="entry name" value="Poly A polymerase C-terminal region-like"/>
    <property type="match status" value="1"/>
</dbReference>
<accession>Q834S5</accession>
<protein>
    <recommendedName>
        <fullName evidence="1">CCA-adding enzyme</fullName>
        <ecNumber evidence="1">2.7.7.72</ecNumber>
    </recommendedName>
    <alternativeName>
        <fullName evidence="1">CCA tRNA nucleotidyltransferase</fullName>
    </alternativeName>
    <alternativeName>
        <fullName evidence="1">tRNA CCA-pyrophosphorylase</fullName>
    </alternativeName>
    <alternativeName>
        <fullName evidence="1">tRNA adenylyl-/cytidylyl- transferase</fullName>
    </alternativeName>
    <alternativeName>
        <fullName evidence="1">tRNA nucleotidyltransferase</fullName>
    </alternativeName>
    <alternativeName>
        <fullName evidence="1">tRNA-NT</fullName>
    </alternativeName>
</protein>
<proteinExistence type="inferred from homology"/>
<name>CCA_ENTFA</name>
<comment type="function">
    <text evidence="1">Catalyzes the addition and repair of the essential 3'-terminal CCA sequence in tRNAs without using a nucleic acid template. Adds these three nucleotides in the order of C, C, and A to the tRNA nucleotide-73, using CTP and ATP as substrates and producing inorganic pyrophosphate. tRNA 3'-terminal CCA addition is required both for tRNA processing and repair. Also involved in tRNA surveillance by mediating tandem CCA addition to generate a CCACCA at the 3' terminus of unstable tRNAs. While stable tRNAs receive only 3'-terminal CCA, unstable tRNAs are marked with CCACCA and rapidly degraded.</text>
</comment>
<comment type="catalytic activity">
    <reaction evidence="1">
        <text>a tRNA precursor + 2 CTP + ATP = a tRNA with a 3' CCA end + 3 diphosphate</text>
        <dbReference type="Rhea" id="RHEA:14433"/>
        <dbReference type="Rhea" id="RHEA-COMP:10465"/>
        <dbReference type="Rhea" id="RHEA-COMP:10468"/>
        <dbReference type="ChEBI" id="CHEBI:30616"/>
        <dbReference type="ChEBI" id="CHEBI:33019"/>
        <dbReference type="ChEBI" id="CHEBI:37563"/>
        <dbReference type="ChEBI" id="CHEBI:74896"/>
        <dbReference type="ChEBI" id="CHEBI:83071"/>
        <dbReference type="EC" id="2.7.7.72"/>
    </reaction>
</comment>
<comment type="catalytic activity">
    <reaction evidence="1">
        <text>a tRNA with a 3' CCA end + 2 CTP + ATP = a tRNA with a 3' CCACCA end + 3 diphosphate</text>
        <dbReference type="Rhea" id="RHEA:76235"/>
        <dbReference type="Rhea" id="RHEA-COMP:10468"/>
        <dbReference type="Rhea" id="RHEA-COMP:18655"/>
        <dbReference type="ChEBI" id="CHEBI:30616"/>
        <dbReference type="ChEBI" id="CHEBI:33019"/>
        <dbReference type="ChEBI" id="CHEBI:37563"/>
        <dbReference type="ChEBI" id="CHEBI:83071"/>
        <dbReference type="ChEBI" id="CHEBI:195187"/>
    </reaction>
    <physiologicalReaction direction="left-to-right" evidence="1">
        <dbReference type="Rhea" id="RHEA:76236"/>
    </physiologicalReaction>
</comment>
<comment type="cofactor">
    <cofactor evidence="1">
        <name>Mg(2+)</name>
        <dbReference type="ChEBI" id="CHEBI:18420"/>
    </cofactor>
</comment>
<comment type="subunit">
    <text evidence="1">Homodimer.</text>
</comment>
<comment type="miscellaneous">
    <text evidence="1">A single active site specifically recognizes both ATP and CTP and is responsible for their addition.</text>
</comment>
<comment type="similarity">
    <text evidence="1">Belongs to the tRNA nucleotidyltransferase/poly(A) polymerase family. Bacterial CCA-adding enzyme type 3 subfamily.</text>
</comment>
<evidence type="ECO:0000255" key="1">
    <source>
        <dbReference type="HAMAP-Rule" id="MF_01263"/>
    </source>
</evidence>
<feature type="chain" id="PRO_0000139035" description="CCA-adding enzyme">
    <location>
        <begin position="1"/>
        <end position="406"/>
    </location>
</feature>
<feature type="binding site" evidence="1">
    <location>
        <position position="32"/>
    </location>
    <ligand>
        <name>ATP</name>
        <dbReference type="ChEBI" id="CHEBI:30616"/>
    </ligand>
</feature>
<feature type="binding site" evidence="1">
    <location>
        <position position="32"/>
    </location>
    <ligand>
        <name>CTP</name>
        <dbReference type="ChEBI" id="CHEBI:37563"/>
    </ligand>
</feature>
<feature type="binding site" evidence="1">
    <location>
        <position position="35"/>
    </location>
    <ligand>
        <name>ATP</name>
        <dbReference type="ChEBI" id="CHEBI:30616"/>
    </ligand>
</feature>
<feature type="binding site" evidence="1">
    <location>
        <position position="35"/>
    </location>
    <ligand>
        <name>CTP</name>
        <dbReference type="ChEBI" id="CHEBI:37563"/>
    </ligand>
</feature>
<feature type="binding site" evidence="1">
    <location>
        <position position="45"/>
    </location>
    <ligand>
        <name>Mg(2+)</name>
        <dbReference type="ChEBI" id="CHEBI:18420"/>
    </ligand>
</feature>
<feature type="binding site" evidence="1">
    <location>
        <position position="47"/>
    </location>
    <ligand>
        <name>Mg(2+)</name>
        <dbReference type="ChEBI" id="CHEBI:18420"/>
    </ligand>
</feature>
<feature type="binding site" evidence="1">
    <location>
        <position position="116"/>
    </location>
    <ligand>
        <name>ATP</name>
        <dbReference type="ChEBI" id="CHEBI:30616"/>
    </ligand>
</feature>
<feature type="binding site" evidence="1">
    <location>
        <position position="116"/>
    </location>
    <ligand>
        <name>CTP</name>
        <dbReference type="ChEBI" id="CHEBI:37563"/>
    </ligand>
</feature>
<feature type="binding site" evidence="1">
    <location>
        <position position="159"/>
    </location>
    <ligand>
        <name>ATP</name>
        <dbReference type="ChEBI" id="CHEBI:30616"/>
    </ligand>
</feature>
<feature type="binding site" evidence="1">
    <location>
        <position position="159"/>
    </location>
    <ligand>
        <name>CTP</name>
        <dbReference type="ChEBI" id="CHEBI:37563"/>
    </ligand>
</feature>
<feature type="binding site" evidence="1">
    <location>
        <position position="162"/>
    </location>
    <ligand>
        <name>ATP</name>
        <dbReference type="ChEBI" id="CHEBI:30616"/>
    </ligand>
</feature>
<feature type="binding site" evidence="1">
    <location>
        <position position="162"/>
    </location>
    <ligand>
        <name>CTP</name>
        <dbReference type="ChEBI" id="CHEBI:37563"/>
    </ligand>
</feature>
<feature type="binding site" evidence="1">
    <location>
        <position position="165"/>
    </location>
    <ligand>
        <name>ATP</name>
        <dbReference type="ChEBI" id="CHEBI:30616"/>
    </ligand>
</feature>
<feature type="binding site" evidence="1">
    <location>
        <position position="165"/>
    </location>
    <ligand>
        <name>CTP</name>
        <dbReference type="ChEBI" id="CHEBI:37563"/>
    </ligand>
</feature>
<feature type="binding site" evidence="1">
    <location>
        <position position="168"/>
    </location>
    <ligand>
        <name>ATP</name>
        <dbReference type="ChEBI" id="CHEBI:30616"/>
    </ligand>
</feature>
<feature type="binding site" evidence="1">
    <location>
        <position position="168"/>
    </location>
    <ligand>
        <name>CTP</name>
        <dbReference type="ChEBI" id="CHEBI:37563"/>
    </ligand>
</feature>
<organism>
    <name type="scientific">Enterococcus faecalis (strain ATCC 700802 / V583)</name>
    <dbReference type="NCBI Taxonomy" id="226185"/>
    <lineage>
        <taxon>Bacteria</taxon>
        <taxon>Bacillati</taxon>
        <taxon>Bacillota</taxon>
        <taxon>Bacilli</taxon>
        <taxon>Lactobacillales</taxon>
        <taxon>Enterococcaceae</taxon>
        <taxon>Enterococcus</taxon>
    </lineage>
</organism>
<gene>
    <name evidence="1" type="primary">cca</name>
    <name type="ordered locus">EF_1558</name>
</gene>
<keyword id="KW-0067">ATP-binding</keyword>
<keyword id="KW-0460">Magnesium</keyword>
<keyword id="KW-0479">Metal-binding</keyword>
<keyword id="KW-0547">Nucleotide-binding</keyword>
<keyword id="KW-0548">Nucleotidyltransferase</keyword>
<keyword id="KW-1185">Reference proteome</keyword>
<keyword id="KW-0692">RNA repair</keyword>
<keyword id="KW-0694">RNA-binding</keyword>
<keyword id="KW-0808">Transferase</keyword>
<keyword id="KW-0819">tRNA processing</keyword>